<dbReference type="EMBL" id="CP000576">
    <property type="protein sequence ID" value="ABO16974.1"/>
    <property type="molecule type" value="Genomic_DNA"/>
</dbReference>
<dbReference type="RefSeq" id="WP_011817812.1">
    <property type="nucleotide sequence ID" value="NC_009091.1"/>
</dbReference>
<dbReference type="SMR" id="A3PB49"/>
<dbReference type="STRING" id="167546.P9301_03511"/>
<dbReference type="KEGG" id="pmg:P9301_03511"/>
<dbReference type="eggNOG" id="COG1290">
    <property type="taxonomic scope" value="Bacteria"/>
</dbReference>
<dbReference type="HOGENOM" id="CLU_031114_0_2_3"/>
<dbReference type="OrthoDB" id="9804503at2"/>
<dbReference type="Proteomes" id="UP000001430">
    <property type="component" value="Chromosome"/>
</dbReference>
<dbReference type="GO" id="GO:0031676">
    <property type="term" value="C:plasma membrane-derived thylakoid membrane"/>
    <property type="evidence" value="ECO:0007669"/>
    <property type="project" value="UniProtKB-SubCell"/>
</dbReference>
<dbReference type="GO" id="GO:0045158">
    <property type="term" value="F:electron transporter, transferring electrons within cytochrome b6/f complex of photosystem II activity"/>
    <property type="evidence" value="ECO:0007669"/>
    <property type="project" value="UniProtKB-UniRule"/>
</dbReference>
<dbReference type="GO" id="GO:0046872">
    <property type="term" value="F:metal ion binding"/>
    <property type="evidence" value="ECO:0007669"/>
    <property type="project" value="UniProtKB-KW"/>
</dbReference>
<dbReference type="GO" id="GO:0016491">
    <property type="term" value="F:oxidoreductase activity"/>
    <property type="evidence" value="ECO:0007669"/>
    <property type="project" value="InterPro"/>
</dbReference>
<dbReference type="GO" id="GO:0015979">
    <property type="term" value="P:photosynthesis"/>
    <property type="evidence" value="ECO:0007669"/>
    <property type="project" value="UniProtKB-UniRule"/>
</dbReference>
<dbReference type="GO" id="GO:0022904">
    <property type="term" value="P:respiratory electron transport chain"/>
    <property type="evidence" value="ECO:0007669"/>
    <property type="project" value="InterPro"/>
</dbReference>
<dbReference type="CDD" id="cd00284">
    <property type="entry name" value="Cytochrome_b_N"/>
    <property type="match status" value="1"/>
</dbReference>
<dbReference type="FunFam" id="1.20.810.10:FF:000001">
    <property type="entry name" value="Cytochrome b6"/>
    <property type="match status" value="1"/>
</dbReference>
<dbReference type="Gene3D" id="1.20.810.10">
    <property type="entry name" value="Cytochrome Bc1 Complex, Chain C"/>
    <property type="match status" value="1"/>
</dbReference>
<dbReference type="HAMAP" id="MF_00633">
    <property type="entry name" value="Cytb6_f_cytb6"/>
    <property type="match status" value="1"/>
</dbReference>
<dbReference type="InterPro" id="IPR005797">
    <property type="entry name" value="Cyt_b/b6_N"/>
</dbReference>
<dbReference type="InterPro" id="IPR023530">
    <property type="entry name" value="Cyt_B6_PetB"/>
</dbReference>
<dbReference type="InterPro" id="IPR027387">
    <property type="entry name" value="Cytb/b6-like_sf"/>
</dbReference>
<dbReference type="InterPro" id="IPR048259">
    <property type="entry name" value="Cytochrome_b_N_euk/bac"/>
</dbReference>
<dbReference type="InterPro" id="IPR016174">
    <property type="entry name" value="Di-haem_cyt_TM"/>
</dbReference>
<dbReference type="NCBIfam" id="NF002990">
    <property type="entry name" value="PRK03735.1"/>
    <property type="match status" value="1"/>
</dbReference>
<dbReference type="PANTHER" id="PTHR19271">
    <property type="entry name" value="CYTOCHROME B"/>
    <property type="match status" value="1"/>
</dbReference>
<dbReference type="PANTHER" id="PTHR19271:SF16">
    <property type="entry name" value="CYTOCHROME B"/>
    <property type="match status" value="1"/>
</dbReference>
<dbReference type="Pfam" id="PF00033">
    <property type="entry name" value="Cytochrome_B"/>
    <property type="match status" value="1"/>
</dbReference>
<dbReference type="PIRSF" id="PIRSF000032">
    <property type="entry name" value="Cytochrome_b6"/>
    <property type="match status" value="1"/>
</dbReference>
<dbReference type="SUPFAM" id="SSF81342">
    <property type="entry name" value="Transmembrane di-heme cytochromes"/>
    <property type="match status" value="1"/>
</dbReference>
<dbReference type="PROSITE" id="PS51002">
    <property type="entry name" value="CYTB_NTER"/>
    <property type="match status" value="1"/>
</dbReference>
<proteinExistence type="inferred from homology"/>
<gene>
    <name evidence="1" type="primary">petB</name>
    <name type="ordered locus">P9301_03511</name>
</gene>
<name>CYB6_PROM0</name>
<accession>A3PB49</accession>
<evidence type="ECO:0000255" key="1">
    <source>
        <dbReference type="HAMAP-Rule" id="MF_00633"/>
    </source>
</evidence>
<comment type="function">
    <text evidence="1">Component of the cytochrome b6-f complex, which mediates electron transfer between photosystem II (PSII) and photosystem I (PSI), cyclic electron flow around PSI, and state transitions.</text>
</comment>
<comment type="cofactor">
    <cofactor evidence="1">
        <name>heme b</name>
        <dbReference type="ChEBI" id="CHEBI:60344"/>
    </cofactor>
    <text evidence="1">Binds 2 heme b groups non-covalently with two histidine residues as axial ligands.</text>
</comment>
<comment type="cofactor">
    <cofactor evidence="1">
        <name>heme c</name>
        <dbReference type="ChEBI" id="CHEBI:61717"/>
    </cofactor>
    <text evidence="1">Binds one heme group covalently by a single cysteine link with no axial amino acid ligand. This heme was named heme ci.</text>
</comment>
<comment type="subunit">
    <text evidence="1">The 4 large subunits of the cytochrome b6-f complex are cytochrome b6, subunit IV (17 kDa polypeptide, PetD), cytochrome f and the Rieske protein, while the 4 small subunits are PetG, PetL, PetM and PetN. The complex functions as a dimer.</text>
</comment>
<comment type="subcellular location">
    <subcellularLocation>
        <location evidence="1">Cellular thylakoid membrane</location>
        <topology evidence="1">Multi-pass membrane protein</topology>
    </subcellularLocation>
</comment>
<comment type="miscellaneous">
    <text evidence="1">Heme 1 (or BH or b566) is high-potential and absorbs at about 566 nm, and heme 2 (or BL or b562) is low-potential and absorbs at about 562 nm.</text>
</comment>
<comment type="similarity">
    <text evidence="1">Belongs to the cytochrome b family. PetB subfamily.</text>
</comment>
<sequence>MANSSSVYDWFQERLEIQDITDDVTSKYVPPHVNIFYCLGGITLVCFLIQFATGFAMTFYYKPTVTQAYSSVSYLMTDVSFGWLIRSVHRWSASMMVLMLILHVFRVYLTGGFKRPRELTWVTGVVMAVITVAFGVTGYSLPWDQVGYWAVKIVSGVPAAIPVIGDFMVELLRGGESVGQSTLTRFYSLHTFVLPWSLAVFMLMHFLMIRKQGISGPL</sequence>
<reference key="1">
    <citation type="journal article" date="2007" name="PLoS Genet.">
        <title>Patterns and implications of gene gain and loss in the evolution of Prochlorococcus.</title>
        <authorList>
            <person name="Kettler G.C."/>
            <person name="Martiny A.C."/>
            <person name="Huang K."/>
            <person name="Zucker J."/>
            <person name="Coleman M.L."/>
            <person name="Rodrigue S."/>
            <person name="Chen F."/>
            <person name="Lapidus A."/>
            <person name="Ferriera S."/>
            <person name="Johnson J."/>
            <person name="Steglich C."/>
            <person name="Church G.M."/>
            <person name="Richardson P."/>
            <person name="Chisholm S.W."/>
        </authorList>
    </citation>
    <scope>NUCLEOTIDE SEQUENCE [LARGE SCALE GENOMIC DNA]</scope>
    <source>
        <strain>MIT 9301</strain>
    </source>
</reference>
<feature type="chain" id="PRO_1000061407" description="Cytochrome b6">
    <location>
        <begin position="1"/>
        <end position="218"/>
    </location>
</feature>
<feature type="transmembrane region" description="Helical" evidence="1">
    <location>
        <begin position="35"/>
        <end position="55"/>
    </location>
</feature>
<feature type="transmembrane region" description="Helical" evidence="1">
    <location>
        <begin position="93"/>
        <end position="113"/>
    </location>
</feature>
<feature type="transmembrane region" description="Helical" evidence="1">
    <location>
        <begin position="119"/>
        <end position="139"/>
    </location>
</feature>
<feature type="transmembrane region" description="Helical" evidence="1">
    <location>
        <begin position="189"/>
        <end position="209"/>
    </location>
</feature>
<feature type="binding site" description="covalent" evidence="1">
    <location>
        <position position="38"/>
    </location>
    <ligand>
        <name>heme c</name>
        <dbReference type="ChEBI" id="CHEBI:61717"/>
    </ligand>
</feature>
<feature type="binding site" description="axial binding residue" evidence="1">
    <location>
        <position position="89"/>
    </location>
    <ligand>
        <name>heme b</name>
        <dbReference type="ChEBI" id="CHEBI:60344"/>
        <label>2</label>
    </ligand>
    <ligandPart>
        <name>Fe</name>
        <dbReference type="ChEBI" id="CHEBI:18248"/>
    </ligandPart>
</feature>
<feature type="binding site" description="axial binding residue" evidence="1">
    <location>
        <position position="103"/>
    </location>
    <ligand>
        <name>heme b</name>
        <dbReference type="ChEBI" id="CHEBI:60344"/>
        <label>1</label>
    </ligand>
    <ligandPart>
        <name>Fe</name>
        <dbReference type="ChEBI" id="CHEBI:18248"/>
    </ligandPart>
</feature>
<feature type="binding site" description="axial binding residue" evidence="1">
    <location>
        <position position="190"/>
    </location>
    <ligand>
        <name>heme b</name>
        <dbReference type="ChEBI" id="CHEBI:60344"/>
        <label>2</label>
    </ligand>
    <ligandPart>
        <name>Fe</name>
        <dbReference type="ChEBI" id="CHEBI:18248"/>
    </ligandPart>
</feature>
<feature type="binding site" description="axial binding residue" evidence="1">
    <location>
        <position position="205"/>
    </location>
    <ligand>
        <name>heme b</name>
        <dbReference type="ChEBI" id="CHEBI:60344"/>
        <label>1</label>
    </ligand>
    <ligandPart>
        <name>Fe</name>
        <dbReference type="ChEBI" id="CHEBI:18248"/>
    </ligandPart>
</feature>
<protein>
    <recommendedName>
        <fullName evidence="1">Cytochrome b6</fullName>
    </recommendedName>
</protein>
<keyword id="KW-0249">Electron transport</keyword>
<keyword id="KW-0349">Heme</keyword>
<keyword id="KW-0408">Iron</keyword>
<keyword id="KW-0472">Membrane</keyword>
<keyword id="KW-0479">Metal-binding</keyword>
<keyword id="KW-0602">Photosynthesis</keyword>
<keyword id="KW-1185">Reference proteome</keyword>
<keyword id="KW-0793">Thylakoid</keyword>
<keyword id="KW-0812">Transmembrane</keyword>
<keyword id="KW-1133">Transmembrane helix</keyword>
<keyword id="KW-0813">Transport</keyword>
<organism>
    <name type="scientific">Prochlorococcus marinus (strain MIT 9301)</name>
    <dbReference type="NCBI Taxonomy" id="167546"/>
    <lineage>
        <taxon>Bacteria</taxon>
        <taxon>Bacillati</taxon>
        <taxon>Cyanobacteriota</taxon>
        <taxon>Cyanophyceae</taxon>
        <taxon>Synechococcales</taxon>
        <taxon>Prochlorococcaceae</taxon>
        <taxon>Prochlorococcus</taxon>
    </lineage>
</organism>